<evidence type="ECO:0000255" key="1">
    <source>
        <dbReference type="HAMAP-Rule" id="MF_01309"/>
    </source>
</evidence>
<evidence type="ECO:0000305" key="2"/>
<proteinExistence type="inferred from homology"/>
<name>RS3_BACCN</name>
<sequence>MGQKVNPVGLRVGVIRDWESRWFAEKDYATLLHEDIKIREYITARLKDSSVSKVEIERAANRVNVTIHTAKPGMVIGKGGTEVEALRKALNQLTGKRVHINILEVKKADLDAKLVAENIARQLENRVSFRRAQKQVIQRAMRAGAKGIKTQVSGRLGGADIARAESYSEGTVPLHTLRADIDYATAEADTTYGKLGVKVWIYRGEVLPSKKKASEEGGK</sequence>
<comment type="function">
    <text evidence="1">Binds the lower part of the 30S subunit head. Binds mRNA in the 70S ribosome, positioning it for translation.</text>
</comment>
<comment type="subunit">
    <text evidence="1">Part of the 30S ribosomal subunit. Forms a tight complex with proteins S10 and S14.</text>
</comment>
<comment type="similarity">
    <text evidence="1">Belongs to the universal ribosomal protein uS3 family.</text>
</comment>
<reference key="1">
    <citation type="journal article" date="2008" name="Chem. Biol. Interact.">
        <title>Extending the Bacillus cereus group genomics to putative food-borne pathogens of different toxicity.</title>
        <authorList>
            <person name="Lapidus A."/>
            <person name="Goltsman E."/>
            <person name="Auger S."/>
            <person name="Galleron N."/>
            <person name="Segurens B."/>
            <person name="Dossat C."/>
            <person name="Land M.L."/>
            <person name="Broussolle V."/>
            <person name="Brillard J."/>
            <person name="Guinebretiere M.-H."/>
            <person name="Sanchis V."/>
            <person name="Nguen-the C."/>
            <person name="Lereclus D."/>
            <person name="Richardson P."/>
            <person name="Wincker P."/>
            <person name="Weissenbach J."/>
            <person name="Ehrlich S.D."/>
            <person name="Sorokin A."/>
        </authorList>
    </citation>
    <scope>NUCLEOTIDE SEQUENCE [LARGE SCALE GENOMIC DNA]</scope>
    <source>
        <strain>DSM 22905 / CIP 110041 / 391-98 / NVH 391-98</strain>
    </source>
</reference>
<organism>
    <name type="scientific">Bacillus cytotoxicus (strain DSM 22905 / CIP 110041 / 391-98 / NVH 391-98)</name>
    <dbReference type="NCBI Taxonomy" id="315749"/>
    <lineage>
        <taxon>Bacteria</taxon>
        <taxon>Bacillati</taxon>
        <taxon>Bacillota</taxon>
        <taxon>Bacilli</taxon>
        <taxon>Bacillales</taxon>
        <taxon>Bacillaceae</taxon>
        <taxon>Bacillus</taxon>
        <taxon>Bacillus cereus group</taxon>
    </lineage>
</organism>
<feature type="chain" id="PRO_1000086089" description="Small ribosomal subunit protein uS3">
    <location>
        <begin position="1"/>
        <end position="219"/>
    </location>
</feature>
<feature type="domain" description="KH type-2" evidence="1">
    <location>
        <begin position="38"/>
        <end position="106"/>
    </location>
</feature>
<accession>A7GK26</accession>
<protein>
    <recommendedName>
        <fullName evidence="1">Small ribosomal subunit protein uS3</fullName>
    </recommendedName>
    <alternativeName>
        <fullName evidence="2">30S ribosomal protein S3</fullName>
    </alternativeName>
</protein>
<keyword id="KW-0687">Ribonucleoprotein</keyword>
<keyword id="KW-0689">Ribosomal protein</keyword>
<keyword id="KW-0694">RNA-binding</keyword>
<keyword id="KW-0699">rRNA-binding</keyword>
<gene>
    <name evidence="1" type="primary">rpsC</name>
    <name type="ordered locus">Bcer98_0110</name>
</gene>
<dbReference type="EMBL" id="CP000764">
    <property type="protein sequence ID" value="ABS20484.1"/>
    <property type="molecule type" value="Genomic_DNA"/>
</dbReference>
<dbReference type="RefSeq" id="WP_011983251.1">
    <property type="nucleotide sequence ID" value="NC_009674.1"/>
</dbReference>
<dbReference type="SMR" id="A7GK26"/>
<dbReference type="STRING" id="315749.Bcer98_0110"/>
<dbReference type="GeneID" id="33895431"/>
<dbReference type="KEGG" id="bcy:Bcer98_0110"/>
<dbReference type="eggNOG" id="COG0092">
    <property type="taxonomic scope" value="Bacteria"/>
</dbReference>
<dbReference type="HOGENOM" id="CLU_058591_0_2_9"/>
<dbReference type="OrthoDB" id="9806396at2"/>
<dbReference type="Proteomes" id="UP000002300">
    <property type="component" value="Chromosome"/>
</dbReference>
<dbReference type="GO" id="GO:0022627">
    <property type="term" value="C:cytosolic small ribosomal subunit"/>
    <property type="evidence" value="ECO:0007669"/>
    <property type="project" value="TreeGrafter"/>
</dbReference>
<dbReference type="GO" id="GO:0003729">
    <property type="term" value="F:mRNA binding"/>
    <property type="evidence" value="ECO:0007669"/>
    <property type="project" value="UniProtKB-UniRule"/>
</dbReference>
<dbReference type="GO" id="GO:0019843">
    <property type="term" value="F:rRNA binding"/>
    <property type="evidence" value="ECO:0007669"/>
    <property type="project" value="UniProtKB-UniRule"/>
</dbReference>
<dbReference type="GO" id="GO:0003735">
    <property type="term" value="F:structural constituent of ribosome"/>
    <property type="evidence" value="ECO:0007669"/>
    <property type="project" value="InterPro"/>
</dbReference>
<dbReference type="GO" id="GO:0006412">
    <property type="term" value="P:translation"/>
    <property type="evidence" value="ECO:0007669"/>
    <property type="project" value="UniProtKB-UniRule"/>
</dbReference>
<dbReference type="CDD" id="cd02412">
    <property type="entry name" value="KH-II_30S_S3"/>
    <property type="match status" value="1"/>
</dbReference>
<dbReference type="FunFam" id="3.30.1140.32:FF:000001">
    <property type="entry name" value="30S ribosomal protein S3"/>
    <property type="match status" value="1"/>
</dbReference>
<dbReference type="FunFam" id="3.30.300.20:FF:000001">
    <property type="entry name" value="30S ribosomal protein S3"/>
    <property type="match status" value="1"/>
</dbReference>
<dbReference type="Gene3D" id="3.30.300.20">
    <property type="match status" value="1"/>
</dbReference>
<dbReference type="Gene3D" id="3.30.1140.32">
    <property type="entry name" value="Ribosomal protein S3, C-terminal domain"/>
    <property type="match status" value="1"/>
</dbReference>
<dbReference type="HAMAP" id="MF_01309_B">
    <property type="entry name" value="Ribosomal_uS3_B"/>
    <property type="match status" value="1"/>
</dbReference>
<dbReference type="InterPro" id="IPR004087">
    <property type="entry name" value="KH_dom"/>
</dbReference>
<dbReference type="InterPro" id="IPR015946">
    <property type="entry name" value="KH_dom-like_a/b"/>
</dbReference>
<dbReference type="InterPro" id="IPR004044">
    <property type="entry name" value="KH_dom_type_2"/>
</dbReference>
<dbReference type="InterPro" id="IPR009019">
    <property type="entry name" value="KH_sf_prok-type"/>
</dbReference>
<dbReference type="InterPro" id="IPR036419">
    <property type="entry name" value="Ribosomal_S3_C_sf"/>
</dbReference>
<dbReference type="InterPro" id="IPR005704">
    <property type="entry name" value="Ribosomal_uS3_bac-typ"/>
</dbReference>
<dbReference type="InterPro" id="IPR001351">
    <property type="entry name" value="Ribosomal_uS3_C"/>
</dbReference>
<dbReference type="InterPro" id="IPR018280">
    <property type="entry name" value="Ribosomal_uS3_CS"/>
</dbReference>
<dbReference type="NCBIfam" id="TIGR01009">
    <property type="entry name" value="rpsC_bact"/>
    <property type="match status" value="1"/>
</dbReference>
<dbReference type="PANTHER" id="PTHR11760">
    <property type="entry name" value="30S/40S RIBOSOMAL PROTEIN S3"/>
    <property type="match status" value="1"/>
</dbReference>
<dbReference type="PANTHER" id="PTHR11760:SF19">
    <property type="entry name" value="SMALL RIBOSOMAL SUBUNIT PROTEIN US3C"/>
    <property type="match status" value="1"/>
</dbReference>
<dbReference type="Pfam" id="PF07650">
    <property type="entry name" value="KH_2"/>
    <property type="match status" value="1"/>
</dbReference>
<dbReference type="Pfam" id="PF00189">
    <property type="entry name" value="Ribosomal_S3_C"/>
    <property type="match status" value="1"/>
</dbReference>
<dbReference type="SMART" id="SM00322">
    <property type="entry name" value="KH"/>
    <property type="match status" value="1"/>
</dbReference>
<dbReference type="SUPFAM" id="SSF54814">
    <property type="entry name" value="Prokaryotic type KH domain (KH-domain type II)"/>
    <property type="match status" value="1"/>
</dbReference>
<dbReference type="SUPFAM" id="SSF54821">
    <property type="entry name" value="Ribosomal protein S3 C-terminal domain"/>
    <property type="match status" value="1"/>
</dbReference>
<dbReference type="PROSITE" id="PS50823">
    <property type="entry name" value="KH_TYPE_2"/>
    <property type="match status" value="1"/>
</dbReference>
<dbReference type="PROSITE" id="PS00548">
    <property type="entry name" value="RIBOSOMAL_S3"/>
    <property type="match status" value="1"/>
</dbReference>